<name>BP10_BPT4</name>
<feature type="chain" id="PRO_0000165000" description="Baseplate wedge protein gp10">
    <location>
        <begin position="1"/>
        <end position="602"/>
    </location>
</feature>
<feature type="region of interest" description="Disordered" evidence="2">
    <location>
        <begin position="501"/>
        <end position="523"/>
    </location>
</feature>
<feature type="compositionally biased region" description="Polar residues" evidence="2">
    <location>
        <begin position="501"/>
        <end position="512"/>
    </location>
</feature>
<feature type="disulfide bond" description="Interchain (with C-187 in GP7); alternate" evidence="7">
    <location>
        <position position="555"/>
    </location>
</feature>
<feature type="disulfide bond" description="Interchain; alternate" evidence="1 7">
    <location>
        <position position="555"/>
    </location>
</feature>
<feature type="strand" evidence="10">
    <location>
        <begin position="414"/>
        <end position="416"/>
    </location>
</feature>
<feature type="strand" evidence="10">
    <location>
        <begin position="420"/>
        <end position="423"/>
    </location>
</feature>
<feature type="strand" evidence="10">
    <location>
        <begin position="425"/>
        <end position="427"/>
    </location>
</feature>
<feature type="strand" evidence="10">
    <location>
        <begin position="432"/>
        <end position="435"/>
    </location>
</feature>
<feature type="strand" evidence="10">
    <location>
        <begin position="439"/>
        <end position="441"/>
    </location>
</feature>
<feature type="helix" evidence="10">
    <location>
        <begin position="446"/>
        <end position="453"/>
    </location>
</feature>
<feature type="strand" evidence="10">
    <location>
        <begin position="459"/>
        <end position="464"/>
    </location>
</feature>
<feature type="helix" evidence="10">
    <location>
        <begin position="470"/>
        <end position="473"/>
    </location>
</feature>
<feature type="strand" evidence="10">
    <location>
        <begin position="477"/>
        <end position="480"/>
    </location>
</feature>
<feature type="turn" evidence="10">
    <location>
        <begin position="497"/>
        <end position="499"/>
    </location>
</feature>
<feature type="strand" evidence="10">
    <location>
        <begin position="500"/>
        <end position="506"/>
    </location>
</feature>
<feature type="strand" evidence="10">
    <location>
        <begin position="512"/>
        <end position="516"/>
    </location>
</feature>
<feature type="strand" evidence="10">
    <location>
        <begin position="523"/>
        <end position="525"/>
    </location>
</feature>
<feature type="helix" evidence="10">
    <location>
        <begin position="529"/>
        <end position="531"/>
    </location>
</feature>
<feature type="strand" evidence="10">
    <location>
        <begin position="596"/>
        <end position="602"/>
    </location>
</feature>
<gene>
    <name type="primary">10</name>
</gene>
<comment type="function">
    <text evidence="4 7 8">Peripheral baseplate protein that is part of the tail fiber network. Connects the short tail fibers to the baseplate (PubMed:16554069). During infection, the baseplate undergoes a conformational change from a dome-shaped to a star-shaped structure. At this point, gp10 rotates and acts as a lever that unfolds the short tail fibers, which then interact with host cell surface receptors. Involved in the tail assembly.</text>
</comment>
<comment type="subunit">
    <text evidence="1 5 7">Homotrimer; disulfide-linked (PubMed:19896486, PubMed:27193680). Heteromultimer with gp7 (PubMed:19896486, PubMed:27193680); a gp10 molecule is disulfide-linked to gp7 and the other two remaining gp10 molecules form a disulfide bond (PubMed:27193680). The gp10 trimer interacts with gp11 trimer and with the short tail fiber (STF) composed of the gp12 trimer (PubMed:27193680). Part of the baseplate macromolecular complex which consists of gp5, gp5.4, gp27 (central spike complex); gp6, gp25, gp53 (inner baseplate); gp7, gp8 (intermediate baseplate); gp9, gp10, gp11, gp12 (peripheral); gp48 and gp54 (proximal region of the tail tube) (PubMed:27193680).</text>
</comment>
<comment type="subcellular location">
    <subcellularLocation>
        <location evidence="1 3 6 7">Virion</location>
    </subcellularLocation>
    <text evidence="8">Present in 18 copies in the baseplate.</text>
</comment>
<comment type="induction">
    <text evidence="1">Expressed in the late phase of the viral replicative cycle.</text>
</comment>
<comment type="similarity">
    <text evidence="1">Belongs to the T4likevirus baseplate wedge protein gp10 family.</text>
</comment>
<organismHost>
    <name type="scientific">Escherichia coli</name>
    <dbReference type="NCBI Taxonomy" id="562"/>
</organismHost>
<protein>
    <recommendedName>
        <fullName evidence="1 9">Baseplate wedge protein gp10</fullName>
    </recommendedName>
    <alternativeName>
        <fullName evidence="9">Gene product 10</fullName>
        <shortName>gp10</shortName>
    </alternativeName>
</protein>
<keyword id="KW-0002">3D-structure</keyword>
<keyword id="KW-1015">Disulfide bond</keyword>
<keyword id="KW-0426">Late protein</keyword>
<keyword id="KW-1185">Reference proteome</keyword>
<keyword id="KW-1226">Viral baseplate protein</keyword>
<keyword id="KW-1188">Viral release from host cell</keyword>
<keyword id="KW-1245">Viral tail assembly</keyword>
<keyword id="KW-1227">Viral tail protein</keyword>
<keyword id="KW-0946">Virion</keyword>
<dbReference type="EMBL" id="X14192">
    <property type="protein sequence ID" value="CAA32396.1"/>
    <property type="molecule type" value="Genomic_DNA"/>
</dbReference>
<dbReference type="EMBL" id="AF158101">
    <property type="protein sequence ID" value="AAD42415.1"/>
    <property type="molecule type" value="Genomic_DNA"/>
</dbReference>
<dbReference type="EMBL" id="M26253">
    <property type="protein sequence ID" value="AAA32493.1"/>
    <property type="molecule type" value="Genomic_DNA"/>
</dbReference>
<dbReference type="PIR" id="S04083">
    <property type="entry name" value="GEBPT4"/>
</dbReference>
<dbReference type="RefSeq" id="NP_049768.1">
    <property type="nucleotide sequence ID" value="NC_000866.4"/>
</dbReference>
<dbReference type="PDB" id="2FKK">
    <property type="method" value="X-ray"/>
    <property type="resolution" value="1.20 A"/>
    <property type="chains" value="A=397-602"/>
</dbReference>
<dbReference type="PDB" id="2FL8">
    <property type="method" value="EM"/>
    <property type="resolution" value="1.20 A"/>
    <property type="chains" value="A/B/C/D/E/F/G/H/I/J/K/L/M/N/O/P/Q/R=1-602"/>
</dbReference>
<dbReference type="PDB" id="2FL9">
    <property type="method" value="EM"/>
    <property type="resolution" value="17.00 A"/>
    <property type="chains" value="A/B/C/D/E/F/G/H/I/J/K/L/M/N/O/P/Q/R=1-602"/>
</dbReference>
<dbReference type="PDB" id="5HX2">
    <property type="method" value="EM"/>
    <property type="resolution" value="3.80 A"/>
    <property type="chains" value="G/H/I=1-602"/>
</dbReference>
<dbReference type="PDB" id="5IV5">
    <property type="method" value="EM"/>
    <property type="resolution" value="4.11 A"/>
    <property type="chains" value="AC/AD/AE/CF/CG/CH/EI/EJ/FA/HB/HC/HD/I/J/K/f/g/h=1-602"/>
</dbReference>
<dbReference type="PDB" id="5IV7">
    <property type="method" value="EM"/>
    <property type="resolution" value="6.77 A"/>
    <property type="chains" value="AE/AF/AG/CG/DA/DB/FB/FC/FD/I/J/K/Y/Z/a/o/p/q=1-602"/>
</dbReference>
<dbReference type="PDBsum" id="2FKK"/>
<dbReference type="PDBsum" id="2FL8"/>
<dbReference type="PDBsum" id="2FL9"/>
<dbReference type="PDBsum" id="5HX2"/>
<dbReference type="PDBsum" id="5IV5"/>
<dbReference type="PDBsum" id="5IV7"/>
<dbReference type="EMDB" id="EMD-8064"/>
<dbReference type="SMR" id="P10928"/>
<dbReference type="TCDB" id="1.K.1.1.1">
    <property type="family name" value="the gp27/5 t4-baseplate (t4-bp) family"/>
</dbReference>
<dbReference type="GeneID" id="1258808"/>
<dbReference type="KEGG" id="vg:1258808"/>
<dbReference type="OrthoDB" id="531at10239"/>
<dbReference type="EvolutionaryTrace" id="P10928"/>
<dbReference type="Proteomes" id="UP000009087">
    <property type="component" value="Segment"/>
</dbReference>
<dbReference type="GO" id="GO:0098025">
    <property type="term" value="C:virus tail, baseplate"/>
    <property type="evidence" value="ECO:0000314"/>
    <property type="project" value="UniProtKB"/>
</dbReference>
<dbReference type="GO" id="GO:0019076">
    <property type="term" value="P:viral release from host cell"/>
    <property type="evidence" value="ECO:0007669"/>
    <property type="project" value="InterPro"/>
</dbReference>
<dbReference type="GO" id="GO:0098003">
    <property type="term" value="P:viral tail assembly"/>
    <property type="evidence" value="ECO:0007669"/>
    <property type="project" value="UniProtKB-KW"/>
</dbReference>
<dbReference type="Gene3D" id="1.20.5.960">
    <property type="entry name" value="Bacteriophage t4 gene product 9 (gp9)"/>
    <property type="match status" value="1"/>
</dbReference>
<dbReference type="Gene3D" id="2.60.120.640">
    <property type="entry name" value="gp9"/>
    <property type="match status" value="1"/>
</dbReference>
<dbReference type="HAMAP" id="MF_04106">
    <property type="entry name" value="BP10_T4"/>
    <property type="match status" value="1"/>
</dbReference>
<dbReference type="InterPro" id="IPR056391">
    <property type="entry name" value="Baseplate_gp9_C"/>
</dbReference>
<dbReference type="InterPro" id="IPR008987">
    <property type="entry name" value="Baseplate_struct_prot_Gp9/10_N"/>
</dbReference>
<dbReference type="InterPro" id="IPR034695">
    <property type="entry name" value="BP10_T4"/>
</dbReference>
<dbReference type="InterPro" id="IPR053827">
    <property type="entry name" value="Gp10_C"/>
</dbReference>
<dbReference type="InterPro" id="IPR054430">
    <property type="entry name" value="Gp10_D3"/>
</dbReference>
<dbReference type="InterPro" id="IPR036240">
    <property type="entry name" value="Gp9-like_sf"/>
</dbReference>
<dbReference type="InterPro" id="IPR027411">
    <property type="entry name" value="Gp9/Gp10_mid_dom_sf"/>
</dbReference>
<dbReference type="Pfam" id="PF21939">
    <property type="entry name" value="Gp10_C"/>
    <property type="match status" value="1"/>
</dbReference>
<dbReference type="Pfam" id="PF22670">
    <property type="entry name" value="Gp10_D3"/>
    <property type="match status" value="1"/>
</dbReference>
<dbReference type="Pfam" id="PF23618">
    <property type="entry name" value="T4_gp9_10_C"/>
    <property type="match status" value="1"/>
</dbReference>
<dbReference type="Pfam" id="PF07880">
    <property type="entry name" value="T4_gp9_10_N"/>
    <property type="match status" value="1"/>
</dbReference>
<dbReference type="SUPFAM" id="SSF50017">
    <property type="entry name" value="gp9"/>
    <property type="match status" value="1"/>
</dbReference>
<proteinExistence type="evidence at protein level"/>
<accession>P10928</accession>
<sequence length="602" mass="66232">MKQNINIGNVVDDGTGDYLRKGGIKINENFDELYYELGDGDVPYSAGAWKTYNASSGQTLTAEWGKSYAINTSSGRVTINLPKGTVNDYNKVIRARDVFATWNVNPVTLVAASGDTIKGSAVPVEINVRFSDLELVYCAPGRWEYVKNKQIDKITSSDISNVARKEFLVEVQGQTDFLDVFRGTSYNVNNIRVKHRGNELYYGDVFSENSDFGSPGENEGELVPLDGFNIRLRQPCNIGDTVQIETFMDGVSQWRSSYTRRQIRLLDSKLTSKTSLEGSIYVTDLSTMKSIPFSAFGLIPGEPINPNSLEVRFNGILQELAGTVGMPLFHCVGADSDDEVECSVLGGTWEQSHTDYSVETDENGIPEILHFDSVFEHGDIINITWFNNDLGTLLTKDEIIDETDNLYVSQGPGVDISGDVNLTDFDKIGWPNVEAVQSYQRAFNAVSNIFDTIYPIGTIYENAVNPNNPVTYMGFGSWKLFGQGKVLVGWNEDISDPNFALNNNDLDSGGNPSHTAGGTGGSTSVTLENANLPATETDEEVLIVDENGSVIVGGCQYDPDESGPIYTKYREAKASTNSTHTPPTSITNIQPYITVYRWIRIA</sequence>
<reference key="1">
    <citation type="journal article" date="1989" name="Nucleic Acids Res.">
        <title>Nucleotide sequences of bacteriophage T4 genes 9, 10 and 11.</title>
        <authorList>
            <person name="Prilipov A.G."/>
            <person name="Selivanov N.A."/>
            <person name="Efimov V.P."/>
            <person name="Marusich E.I."/>
            <person name="Mesyanzhinov V.V."/>
        </authorList>
    </citation>
    <scope>NUCLEOTIDE SEQUENCE [GENOMIC DNA]</scope>
    <source>
        <strain>D</strain>
    </source>
</reference>
<reference key="2">
    <citation type="journal article" date="2003" name="Microbiol. Mol. Biol. Rev.">
        <title>Bacteriophage T4 genome.</title>
        <authorList>
            <person name="Miller E.S."/>
            <person name="Kutter E."/>
            <person name="Mosig G."/>
            <person name="Arisaka F."/>
            <person name="Kunisawa T."/>
            <person name="Ruger W."/>
        </authorList>
    </citation>
    <scope>NUCLEOTIDE SEQUENCE [LARGE SCALE GENOMIC DNA]</scope>
</reference>
<reference key="3">
    <citation type="journal article" date="1989" name="DNA">
        <title>Using transposon Tn5 insertions to sequence bacteriophage T4 gene 11.</title>
        <authorList>
            <person name="Barrett B.K."/>
            <person name="Berget P.B."/>
        </authorList>
    </citation>
    <scope>NUCLEOTIDE SEQUENCE [GENOMIC DNA] OF 535-602</scope>
    <source>
        <strain>D</strain>
    </source>
</reference>
<reference key="4">
    <citation type="journal article" date="1990" name="J. Virol.">
        <title>Structure of the bacteriophage T4 baseplate as determined by chemical cross-linking.</title>
        <authorList>
            <person name="Watts N.R."/>
            <person name="Coombs D.H."/>
        </authorList>
    </citation>
    <scope>SUBCELLULAR LOCATION</scope>
</reference>
<reference key="5">
    <citation type="journal article" date="2003" name="Cell. Mol. Life Sci.">
        <title>Structure and morphogenesis of bacteriophage T4.</title>
        <authorList>
            <person name="Leiman P.G."/>
            <person name="Kanamaru S."/>
            <person name="Mesyanzhinov V.V."/>
            <person name="Arisaka F."/>
            <person name="Rossmann M.G."/>
        </authorList>
    </citation>
    <scope>REVIEW</scope>
</reference>
<reference key="6">
    <citation type="journal article" date="2010" name="Virol. J.">
        <title>Morphogenesis of the T4 tail and tail fibers.</title>
        <authorList>
            <person name="Leiman P.G."/>
            <person name="Arisaka F."/>
            <person name="van Raaij M.J."/>
            <person name="Kostyuchenko V.A."/>
            <person name="Aksyuk A.A."/>
            <person name="Kanamaru S."/>
            <person name="Rossmann M.G."/>
        </authorList>
    </citation>
    <scope>REVIEW ON FUNCTION</scope>
</reference>
<reference key="7">
    <citation type="journal article" date="2010" name="J. Mol. Biol.">
        <title>The baseplate wedges of bacteriophage T4 spontaneously assemble into hubless baseplate-like structure in vitro.</title>
        <authorList>
            <person name="Yap M.L."/>
            <person name="Mio K."/>
            <person name="Leiman P.G."/>
            <person name="Kanamaru S."/>
            <person name="Arisaka F."/>
        </authorList>
    </citation>
    <scope>SUBUNIT</scope>
</reference>
<reference key="8">
    <citation type="journal article" date="2004" name="Cell">
        <title>Three-dimensional rearrangement of proteins in the tail of bacteriophage T4 on infection of its host.</title>
        <authorList>
            <person name="Leiman P.G."/>
            <person name="Chipman P.R."/>
            <person name="Kostyuchenko V.A."/>
            <person name="Mesyanzhinov V.V."/>
            <person name="Rossmann M.G."/>
        </authorList>
    </citation>
    <scope>STRUCTURE BY ELECTRON MICROSCOPY (17.0 ANGSTROMS) OF THE CONTRACTED TAIL</scope>
    <scope>SUBCELLULAR LOCATION</scope>
</reference>
<reference key="9">
    <citation type="journal article" date="2006" name="J. Mol. Biol.">
        <title>Evolution of bacteriophage tails: Structure of T4 gene product 10.</title>
        <authorList>
            <person name="Leiman P.G."/>
            <person name="Shneider M.M."/>
            <person name="Mesyanzhinov V.V."/>
            <person name="Rossmann M.G."/>
        </authorList>
    </citation>
    <scope>X-RAY CRYSTALLOGRAPHY (1.2 ANGSTROMS) OF 397-602</scope>
    <scope>FUNCTION</scope>
</reference>
<reference key="10">
    <citation type="journal article" date="2016" name="Nature">
        <title>Structure of the T4 baseplate and its function in triggering sheath contraction.</title>
        <authorList>
            <person name="Taylor N.M."/>
            <person name="Prokhorov N.S."/>
            <person name="Guerrero-Ferreira R.C."/>
            <person name="Shneider M.M."/>
            <person name="Browning C."/>
            <person name="Goldie K.N."/>
            <person name="Stahlberg H."/>
            <person name="Leiman P.G."/>
        </authorList>
    </citation>
    <scope>STRUCTURE BY ELECTRON MICROSCOPY (4.11 ANGSTROMS)</scope>
    <scope>SUBUNIT</scope>
    <scope>SUBCELLULAR LOCATION</scope>
    <scope>FUNCTION</scope>
    <scope>IDENTIFICATION IN THE TAIL FIBER NETWORK</scope>
    <scope>DISULFIDE BOND</scope>
    <scope>INTERACTION WITH GP7</scope>
    <scope>INTERACTION WITH GP11</scope>
    <scope>INTERACTION WITH GP12</scope>
</reference>
<organism>
    <name type="scientific">Enterobacteria phage T4</name>
    <name type="common">Bacteriophage T4</name>
    <dbReference type="NCBI Taxonomy" id="10665"/>
    <lineage>
        <taxon>Viruses</taxon>
        <taxon>Duplodnaviria</taxon>
        <taxon>Heunggongvirae</taxon>
        <taxon>Uroviricota</taxon>
        <taxon>Caudoviricetes</taxon>
        <taxon>Straboviridae</taxon>
        <taxon>Tevenvirinae</taxon>
        <taxon>Tequatrovirus</taxon>
    </lineage>
</organism>
<evidence type="ECO:0000255" key="1">
    <source>
        <dbReference type="HAMAP-Rule" id="MF_04106"/>
    </source>
</evidence>
<evidence type="ECO:0000256" key="2">
    <source>
        <dbReference type="SAM" id="MobiDB-lite"/>
    </source>
</evidence>
<evidence type="ECO:0000269" key="3">
    <source>
    </source>
</evidence>
<evidence type="ECO:0000269" key="4">
    <source>
    </source>
</evidence>
<evidence type="ECO:0000269" key="5">
    <source>
    </source>
</evidence>
<evidence type="ECO:0000269" key="6">
    <source>
    </source>
</evidence>
<evidence type="ECO:0000269" key="7">
    <source>
    </source>
</evidence>
<evidence type="ECO:0000303" key="8">
    <source>
    </source>
</evidence>
<evidence type="ECO:0000305" key="9"/>
<evidence type="ECO:0007829" key="10">
    <source>
        <dbReference type="PDB" id="2FKK"/>
    </source>
</evidence>